<gene>
    <name type="primary">Ccnq</name>
    <name type="synonym">Fam58a</name>
</gene>
<comment type="function">
    <text evidence="1">Activating cyclin for the cyclin-associated kinase CDK10.</text>
</comment>
<comment type="subunit">
    <text evidence="1">Associates with CDK10 to promote its kinase activity.</text>
</comment>
<comment type="similarity">
    <text evidence="4">Belongs to the cyclin family. Cyclin-like FAM58 subfamily.</text>
</comment>
<feature type="chain" id="PRO_0000297569" description="Cyclin-Q">
    <location>
        <begin position="1"/>
        <end position="250"/>
    </location>
</feature>
<feature type="region of interest" description="Disordered" evidence="3">
    <location>
        <begin position="1"/>
        <end position="22"/>
    </location>
</feature>
<feature type="compositionally biased region" description="Basic and acidic residues" evidence="3">
    <location>
        <begin position="1"/>
        <end position="10"/>
    </location>
</feature>
<feature type="modified residue" description="N-acetylmethionine" evidence="2">
    <location>
        <position position="1"/>
    </location>
</feature>
<accession>Q4QQW5</accession>
<accession>Q5RJY7</accession>
<proteinExistence type="evidence at transcript level"/>
<sequence>MEAVRPDSCERGTAAARAEERPAPEARAHFRVTRFIMEAGVKLGMQSIPIATACTIYHKFFCEINLDAYDLYLVAMSSLYLAGKVEEQHLRTRDIINVSHRYFNPGSEPLELDSRFWELRDSIVQCELLMLRVLRFQVSFQHPHKYLLHYLISLKNWLNRYSWQRTPISVTAWALLRDSYHGGLCLRFQAQHLAVAVLYLALQVYGVEVPAEGEAEKPWWQVFSDDLTKPIIDNIVSDLIQIYTMDTEIP</sequence>
<protein>
    <recommendedName>
        <fullName>Cyclin-Q</fullName>
    </recommendedName>
    <alternativeName>
        <fullName>CDK10-activating cyclin</fullName>
    </alternativeName>
    <alternativeName>
        <fullName>Cyclin-M</fullName>
    </alternativeName>
    <alternativeName>
        <fullName>Cyclin-related protein FAM58A</fullName>
    </alternativeName>
</protein>
<organism>
    <name type="scientific">Rattus norvegicus</name>
    <name type="common">Rat</name>
    <dbReference type="NCBI Taxonomy" id="10116"/>
    <lineage>
        <taxon>Eukaryota</taxon>
        <taxon>Metazoa</taxon>
        <taxon>Chordata</taxon>
        <taxon>Craniata</taxon>
        <taxon>Vertebrata</taxon>
        <taxon>Euteleostomi</taxon>
        <taxon>Mammalia</taxon>
        <taxon>Eutheria</taxon>
        <taxon>Euarchontoglires</taxon>
        <taxon>Glires</taxon>
        <taxon>Rodentia</taxon>
        <taxon>Myomorpha</taxon>
        <taxon>Muroidea</taxon>
        <taxon>Muridae</taxon>
        <taxon>Murinae</taxon>
        <taxon>Rattus</taxon>
    </lineage>
</organism>
<name>CCNQ_RAT</name>
<evidence type="ECO:0000250" key="1"/>
<evidence type="ECO:0000250" key="2">
    <source>
        <dbReference type="UniProtKB" id="Q8N1B3"/>
    </source>
</evidence>
<evidence type="ECO:0000256" key="3">
    <source>
        <dbReference type="SAM" id="MobiDB-lite"/>
    </source>
</evidence>
<evidence type="ECO:0000305" key="4"/>
<dbReference type="EMBL" id="BC086445">
    <property type="protein sequence ID" value="AAH86445.1"/>
    <property type="molecule type" value="mRNA"/>
</dbReference>
<dbReference type="EMBL" id="BC097941">
    <property type="protein sequence ID" value="AAH97941.1"/>
    <property type="molecule type" value="mRNA"/>
</dbReference>
<dbReference type="RefSeq" id="NP_001020583.1">
    <property type="nucleotide sequence ID" value="NM_001025412.1"/>
</dbReference>
<dbReference type="SMR" id="Q4QQW5"/>
<dbReference type="FunCoup" id="Q4QQW5">
    <property type="interactions" value="1124"/>
</dbReference>
<dbReference type="STRING" id="10116.ENSRNOP00000011019"/>
<dbReference type="iPTMnet" id="Q4QQW5"/>
<dbReference type="PhosphoSitePlus" id="Q4QQW5"/>
<dbReference type="PaxDb" id="10116-ENSRNOP00000011019"/>
<dbReference type="Ensembl" id="ENSRNOT00000011019.4">
    <property type="protein sequence ID" value="ENSRNOP00000011019.2"/>
    <property type="gene ID" value="ENSRNOG00000022582.3"/>
</dbReference>
<dbReference type="GeneID" id="303321"/>
<dbReference type="KEGG" id="rno:303321"/>
<dbReference type="AGR" id="RGD:1305651"/>
<dbReference type="CTD" id="92002"/>
<dbReference type="RGD" id="1305651">
    <property type="gene designation" value="Ccnq"/>
</dbReference>
<dbReference type="eggNOG" id="KOG0834">
    <property type="taxonomic scope" value="Eukaryota"/>
</dbReference>
<dbReference type="GeneTree" id="ENSGT00940000155445"/>
<dbReference type="HOGENOM" id="CLU_022000_2_0_1"/>
<dbReference type="InParanoid" id="Q4QQW5"/>
<dbReference type="OMA" id="MYDMMKY"/>
<dbReference type="OrthoDB" id="79090at2759"/>
<dbReference type="PhylomeDB" id="Q4QQW5"/>
<dbReference type="TreeFam" id="TF101013"/>
<dbReference type="PRO" id="PR:Q4QQW5"/>
<dbReference type="Proteomes" id="UP000002494">
    <property type="component" value="Chromosome 10"/>
</dbReference>
<dbReference type="Bgee" id="ENSRNOG00000022582">
    <property type="expression patterns" value="Expressed in pancreas and 20 other cell types or tissues"/>
</dbReference>
<dbReference type="GO" id="GO:0000307">
    <property type="term" value="C:cyclin-dependent protein kinase holoenzyme complex"/>
    <property type="evidence" value="ECO:0000266"/>
    <property type="project" value="RGD"/>
</dbReference>
<dbReference type="GO" id="GO:0005634">
    <property type="term" value="C:nucleus"/>
    <property type="evidence" value="ECO:0000318"/>
    <property type="project" value="GO_Central"/>
</dbReference>
<dbReference type="GO" id="GO:0016538">
    <property type="term" value="F:cyclin-dependent protein serine/threonine kinase regulator activity"/>
    <property type="evidence" value="ECO:0000318"/>
    <property type="project" value="GO_Central"/>
</dbReference>
<dbReference type="GO" id="GO:0030295">
    <property type="term" value="F:protein kinase activator activity"/>
    <property type="evidence" value="ECO:0000266"/>
    <property type="project" value="RGD"/>
</dbReference>
<dbReference type="GO" id="GO:0043410">
    <property type="term" value="P:positive regulation of MAPK cascade"/>
    <property type="evidence" value="ECO:0000266"/>
    <property type="project" value="RGD"/>
</dbReference>
<dbReference type="GO" id="GO:1902749">
    <property type="term" value="P:regulation of cell cycle G2/M phase transition"/>
    <property type="evidence" value="ECO:0000266"/>
    <property type="project" value="RGD"/>
</dbReference>
<dbReference type="GO" id="GO:0006357">
    <property type="term" value="P:regulation of transcription by RNA polymerase II"/>
    <property type="evidence" value="ECO:0007669"/>
    <property type="project" value="InterPro"/>
</dbReference>
<dbReference type="CDD" id="cd20534">
    <property type="entry name" value="CYCLIN_CCNM_CCNQ_rpt1"/>
    <property type="match status" value="1"/>
</dbReference>
<dbReference type="CDD" id="cd20535">
    <property type="entry name" value="CYCLIN_CCNM_CCNQ_rpt2"/>
    <property type="match status" value="1"/>
</dbReference>
<dbReference type="FunFam" id="1.10.472.10:FF:000071">
    <property type="entry name" value="cyclin-related protein FAM58A isoform X1"/>
    <property type="match status" value="1"/>
</dbReference>
<dbReference type="FunFam" id="1.10.472.10:FF:000042">
    <property type="entry name" value="FAM58A isoform 1"/>
    <property type="match status" value="1"/>
</dbReference>
<dbReference type="Gene3D" id="1.10.472.10">
    <property type="entry name" value="Cyclin-like"/>
    <property type="match status" value="2"/>
</dbReference>
<dbReference type="InterPro" id="IPR013763">
    <property type="entry name" value="Cyclin-like_dom"/>
</dbReference>
<dbReference type="InterPro" id="IPR036915">
    <property type="entry name" value="Cyclin-like_sf"/>
</dbReference>
<dbReference type="InterPro" id="IPR048055">
    <property type="entry name" value="Cyclin-Q_first_cyclin_box"/>
</dbReference>
<dbReference type="InterPro" id="IPR048053">
    <property type="entry name" value="Cyclin-Q_second_cyclin_box"/>
</dbReference>
<dbReference type="InterPro" id="IPR043198">
    <property type="entry name" value="Cyclin/Ssn8"/>
</dbReference>
<dbReference type="InterPro" id="IPR006671">
    <property type="entry name" value="Cyclin_N"/>
</dbReference>
<dbReference type="PANTHER" id="PTHR10026">
    <property type="entry name" value="CYCLIN"/>
    <property type="match status" value="1"/>
</dbReference>
<dbReference type="Pfam" id="PF00134">
    <property type="entry name" value="Cyclin_N"/>
    <property type="match status" value="1"/>
</dbReference>
<dbReference type="PIRSF" id="PIRSF028758">
    <property type="entry name" value="Cyclin, C/H/G types"/>
    <property type="match status" value="1"/>
</dbReference>
<dbReference type="SMART" id="SM00385">
    <property type="entry name" value="CYCLIN"/>
    <property type="match status" value="1"/>
</dbReference>
<dbReference type="SUPFAM" id="SSF47954">
    <property type="entry name" value="Cyclin-like"/>
    <property type="match status" value="2"/>
</dbReference>
<reference key="1">
    <citation type="journal article" date="2004" name="Genome Res.">
        <title>The status, quality, and expansion of the NIH full-length cDNA project: the Mammalian Gene Collection (MGC).</title>
        <authorList>
            <consortium name="The MGC Project Team"/>
        </authorList>
    </citation>
    <scope>NUCLEOTIDE SEQUENCE [LARGE SCALE MRNA]</scope>
    <source>
        <tissue>Ovary</tissue>
        <tissue>Spleen</tissue>
    </source>
</reference>
<keyword id="KW-0007">Acetylation</keyword>
<keyword id="KW-0195">Cyclin</keyword>
<keyword id="KW-1185">Reference proteome</keyword>